<gene>
    <name evidence="1" type="primary">folD</name>
    <name type="ordered locus">YPO2824</name>
    <name type="ordered locus">y1110</name>
    <name type="ordered locus">YP_0855</name>
</gene>
<evidence type="ECO:0000255" key="1">
    <source>
        <dbReference type="HAMAP-Rule" id="MF_01576"/>
    </source>
</evidence>
<proteinExistence type="inferred from homology"/>
<accession>Q7CJY7</accession>
<accession>Q74WL0</accession>
<keyword id="KW-0028">Amino-acid biosynthesis</keyword>
<keyword id="KW-0368">Histidine biosynthesis</keyword>
<keyword id="KW-0378">Hydrolase</keyword>
<keyword id="KW-0486">Methionine biosynthesis</keyword>
<keyword id="KW-0511">Multifunctional enzyme</keyword>
<keyword id="KW-0521">NADP</keyword>
<keyword id="KW-0554">One-carbon metabolism</keyword>
<keyword id="KW-0560">Oxidoreductase</keyword>
<keyword id="KW-0658">Purine biosynthesis</keyword>
<keyword id="KW-1185">Reference proteome</keyword>
<comment type="function">
    <text evidence="1">Catalyzes the oxidation of 5,10-methylenetetrahydrofolate to 5,10-methenyltetrahydrofolate and then the hydrolysis of 5,10-methenyltetrahydrofolate to 10-formyltetrahydrofolate.</text>
</comment>
<comment type="catalytic activity">
    <reaction evidence="1">
        <text>(6R)-5,10-methylene-5,6,7,8-tetrahydrofolate + NADP(+) = (6R)-5,10-methenyltetrahydrofolate + NADPH</text>
        <dbReference type="Rhea" id="RHEA:22812"/>
        <dbReference type="ChEBI" id="CHEBI:15636"/>
        <dbReference type="ChEBI" id="CHEBI:57455"/>
        <dbReference type="ChEBI" id="CHEBI:57783"/>
        <dbReference type="ChEBI" id="CHEBI:58349"/>
        <dbReference type="EC" id="1.5.1.5"/>
    </reaction>
</comment>
<comment type="catalytic activity">
    <reaction evidence="1">
        <text>(6R)-5,10-methenyltetrahydrofolate + H2O = (6R)-10-formyltetrahydrofolate + H(+)</text>
        <dbReference type="Rhea" id="RHEA:23700"/>
        <dbReference type="ChEBI" id="CHEBI:15377"/>
        <dbReference type="ChEBI" id="CHEBI:15378"/>
        <dbReference type="ChEBI" id="CHEBI:57455"/>
        <dbReference type="ChEBI" id="CHEBI:195366"/>
        <dbReference type="EC" id="3.5.4.9"/>
    </reaction>
</comment>
<comment type="pathway">
    <text evidence="1">One-carbon metabolism; tetrahydrofolate interconversion.</text>
</comment>
<comment type="subunit">
    <text evidence="1">Homodimer.</text>
</comment>
<comment type="similarity">
    <text evidence="1">Belongs to the tetrahydrofolate dehydrogenase/cyclohydrolase family.</text>
</comment>
<reference key="1">
    <citation type="journal article" date="2001" name="Nature">
        <title>Genome sequence of Yersinia pestis, the causative agent of plague.</title>
        <authorList>
            <person name="Parkhill J."/>
            <person name="Wren B.W."/>
            <person name="Thomson N.R."/>
            <person name="Titball R.W."/>
            <person name="Holden M.T.G."/>
            <person name="Prentice M.B."/>
            <person name="Sebaihia M."/>
            <person name="James K.D."/>
            <person name="Churcher C.M."/>
            <person name="Mungall K.L."/>
            <person name="Baker S."/>
            <person name="Basham D."/>
            <person name="Bentley S.D."/>
            <person name="Brooks K."/>
            <person name="Cerdeno-Tarraga A.-M."/>
            <person name="Chillingworth T."/>
            <person name="Cronin A."/>
            <person name="Davies R.M."/>
            <person name="Davis P."/>
            <person name="Dougan G."/>
            <person name="Feltwell T."/>
            <person name="Hamlin N."/>
            <person name="Holroyd S."/>
            <person name="Jagels K."/>
            <person name="Karlyshev A.V."/>
            <person name="Leather S."/>
            <person name="Moule S."/>
            <person name="Oyston P.C.F."/>
            <person name="Quail M.A."/>
            <person name="Rutherford K.M."/>
            <person name="Simmonds M."/>
            <person name="Skelton J."/>
            <person name="Stevens K."/>
            <person name="Whitehead S."/>
            <person name="Barrell B.G."/>
        </authorList>
    </citation>
    <scope>NUCLEOTIDE SEQUENCE [LARGE SCALE GENOMIC DNA]</scope>
    <source>
        <strain>CO-92 / Biovar Orientalis</strain>
    </source>
</reference>
<reference key="2">
    <citation type="journal article" date="2002" name="J. Bacteriol.">
        <title>Genome sequence of Yersinia pestis KIM.</title>
        <authorList>
            <person name="Deng W."/>
            <person name="Burland V."/>
            <person name="Plunkett G. III"/>
            <person name="Boutin A."/>
            <person name="Mayhew G.F."/>
            <person name="Liss P."/>
            <person name="Perna N.T."/>
            <person name="Rose D.J."/>
            <person name="Mau B."/>
            <person name="Zhou S."/>
            <person name="Schwartz D.C."/>
            <person name="Fetherston J.D."/>
            <person name="Lindler L.E."/>
            <person name="Brubaker R.R."/>
            <person name="Plano G.V."/>
            <person name="Straley S.C."/>
            <person name="McDonough K.A."/>
            <person name="Nilles M.L."/>
            <person name="Matson J.S."/>
            <person name="Blattner F.R."/>
            <person name="Perry R.D."/>
        </authorList>
    </citation>
    <scope>NUCLEOTIDE SEQUENCE [LARGE SCALE GENOMIC DNA]</scope>
    <source>
        <strain>KIM10+ / Biovar Mediaevalis</strain>
    </source>
</reference>
<reference key="3">
    <citation type="journal article" date="2004" name="DNA Res.">
        <title>Complete genome sequence of Yersinia pestis strain 91001, an isolate avirulent to humans.</title>
        <authorList>
            <person name="Song Y."/>
            <person name="Tong Z."/>
            <person name="Wang J."/>
            <person name="Wang L."/>
            <person name="Guo Z."/>
            <person name="Han Y."/>
            <person name="Zhang J."/>
            <person name="Pei D."/>
            <person name="Zhou D."/>
            <person name="Qin H."/>
            <person name="Pang X."/>
            <person name="Han Y."/>
            <person name="Zhai J."/>
            <person name="Li M."/>
            <person name="Cui B."/>
            <person name="Qi Z."/>
            <person name="Jin L."/>
            <person name="Dai R."/>
            <person name="Chen F."/>
            <person name="Li S."/>
            <person name="Ye C."/>
            <person name="Du Z."/>
            <person name="Lin W."/>
            <person name="Wang J."/>
            <person name="Yu J."/>
            <person name="Yang H."/>
            <person name="Wang J."/>
            <person name="Huang P."/>
            <person name="Yang R."/>
        </authorList>
    </citation>
    <scope>NUCLEOTIDE SEQUENCE [LARGE SCALE GENOMIC DNA]</scope>
    <source>
        <strain>91001 / Biovar Mediaevalis</strain>
    </source>
</reference>
<sequence length="288" mass="30983">MSAKIIDGKTIAQQVRNEVAAVVQQRLAAGKRAPGLAVVLVGENPASQIYVASKRKACEEVGFVSRSYDLPMATSEAELLALIDSLNEDTEIDGILIQLPLPNGIDNVKVLERIHPDKDVDGFHPYNVGRLCQRAPKLRACTPRGIMTLLERYDIPTYGLNAVVVGASNIVGRPMSLELLLAGCTTTVTHRFTKNLRHHIENADLLVVAVGKPGFIPGEWIKPGAIVIDVGINRLESGKVVGDVAFDVAAERAGWITPVPGGVGPMTVATLIQNTLQACEEYHDISQN</sequence>
<protein>
    <recommendedName>
        <fullName evidence="1">Bifunctional protein FolD</fullName>
    </recommendedName>
    <domain>
        <recommendedName>
            <fullName evidence="1">Methylenetetrahydrofolate dehydrogenase</fullName>
            <ecNumber evidence="1">1.5.1.5</ecNumber>
        </recommendedName>
    </domain>
    <domain>
        <recommendedName>
            <fullName evidence="1">Methenyltetrahydrofolate cyclohydrolase</fullName>
            <ecNumber evidence="1">3.5.4.9</ecNumber>
        </recommendedName>
    </domain>
</protein>
<dbReference type="EC" id="1.5.1.5" evidence="1"/>
<dbReference type="EC" id="3.5.4.9" evidence="1"/>
<dbReference type="EMBL" id="AL590842">
    <property type="protein sequence ID" value="CAL21437.1"/>
    <property type="molecule type" value="Genomic_DNA"/>
</dbReference>
<dbReference type="EMBL" id="AE009952">
    <property type="protein sequence ID" value="AAM84688.1"/>
    <property type="molecule type" value="Genomic_DNA"/>
</dbReference>
<dbReference type="EMBL" id="AE017042">
    <property type="protein sequence ID" value="AAS61114.1"/>
    <property type="molecule type" value="Genomic_DNA"/>
</dbReference>
<dbReference type="PIR" id="AB0344">
    <property type="entry name" value="AB0344"/>
</dbReference>
<dbReference type="RefSeq" id="WP_002209774.1">
    <property type="nucleotide sequence ID" value="NZ_WUCM01000108.1"/>
</dbReference>
<dbReference type="RefSeq" id="YP_002347764.1">
    <property type="nucleotide sequence ID" value="NC_003143.1"/>
</dbReference>
<dbReference type="SMR" id="Q7CJY7"/>
<dbReference type="STRING" id="214092.YPO2824"/>
<dbReference type="PaxDb" id="214092-YPO2824"/>
<dbReference type="DNASU" id="1146057"/>
<dbReference type="EnsemblBacteria" id="AAS61114">
    <property type="protein sequence ID" value="AAS61114"/>
    <property type="gene ID" value="YP_0855"/>
</dbReference>
<dbReference type="GeneID" id="57975784"/>
<dbReference type="KEGG" id="ype:YPO2824"/>
<dbReference type="KEGG" id="ypk:y1110"/>
<dbReference type="KEGG" id="ypm:YP_0855"/>
<dbReference type="PATRIC" id="fig|214092.21.peg.3268"/>
<dbReference type="eggNOG" id="COG0190">
    <property type="taxonomic scope" value="Bacteria"/>
</dbReference>
<dbReference type="HOGENOM" id="CLU_034045_2_1_6"/>
<dbReference type="OMA" id="VCHILTK"/>
<dbReference type="OrthoDB" id="9803580at2"/>
<dbReference type="UniPathway" id="UPA00193"/>
<dbReference type="Proteomes" id="UP000000815">
    <property type="component" value="Chromosome"/>
</dbReference>
<dbReference type="Proteomes" id="UP000001019">
    <property type="component" value="Chromosome"/>
</dbReference>
<dbReference type="Proteomes" id="UP000002490">
    <property type="component" value="Chromosome"/>
</dbReference>
<dbReference type="GO" id="GO:0005829">
    <property type="term" value="C:cytosol"/>
    <property type="evidence" value="ECO:0000318"/>
    <property type="project" value="GO_Central"/>
</dbReference>
<dbReference type="GO" id="GO:0004477">
    <property type="term" value="F:methenyltetrahydrofolate cyclohydrolase activity"/>
    <property type="evidence" value="ECO:0000318"/>
    <property type="project" value="GO_Central"/>
</dbReference>
<dbReference type="GO" id="GO:0004488">
    <property type="term" value="F:methylenetetrahydrofolate dehydrogenase (NADP+) activity"/>
    <property type="evidence" value="ECO:0000318"/>
    <property type="project" value="GO_Central"/>
</dbReference>
<dbReference type="GO" id="GO:0000105">
    <property type="term" value="P:L-histidine biosynthetic process"/>
    <property type="evidence" value="ECO:0007669"/>
    <property type="project" value="UniProtKB-KW"/>
</dbReference>
<dbReference type="GO" id="GO:0009086">
    <property type="term" value="P:methionine biosynthetic process"/>
    <property type="evidence" value="ECO:0007669"/>
    <property type="project" value="UniProtKB-KW"/>
</dbReference>
<dbReference type="GO" id="GO:0006164">
    <property type="term" value="P:purine nucleotide biosynthetic process"/>
    <property type="evidence" value="ECO:0007669"/>
    <property type="project" value="UniProtKB-KW"/>
</dbReference>
<dbReference type="GO" id="GO:0035999">
    <property type="term" value="P:tetrahydrofolate interconversion"/>
    <property type="evidence" value="ECO:0000318"/>
    <property type="project" value="GO_Central"/>
</dbReference>
<dbReference type="CDD" id="cd01080">
    <property type="entry name" value="NAD_bind_m-THF_DH_Cyclohyd"/>
    <property type="match status" value="1"/>
</dbReference>
<dbReference type="FunFam" id="3.40.50.10860:FF:000001">
    <property type="entry name" value="Bifunctional protein FolD"/>
    <property type="match status" value="1"/>
</dbReference>
<dbReference type="FunFam" id="3.40.50.720:FF:000006">
    <property type="entry name" value="Bifunctional protein FolD"/>
    <property type="match status" value="1"/>
</dbReference>
<dbReference type="Gene3D" id="3.40.50.10860">
    <property type="entry name" value="Leucine Dehydrogenase, chain A, domain 1"/>
    <property type="match status" value="1"/>
</dbReference>
<dbReference type="Gene3D" id="3.40.50.720">
    <property type="entry name" value="NAD(P)-binding Rossmann-like Domain"/>
    <property type="match status" value="1"/>
</dbReference>
<dbReference type="HAMAP" id="MF_01576">
    <property type="entry name" value="THF_DHG_CYH"/>
    <property type="match status" value="1"/>
</dbReference>
<dbReference type="InterPro" id="IPR046346">
    <property type="entry name" value="Aminoacid_DH-like_N_sf"/>
</dbReference>
<dbReference type="InterPro" id="IPR036291">
    <property type="entry name" value="NAD(P)-bd_dom_sf"/>
</dbReference>
<dbReference type="InterPro" id="IPR000672">
    <property type="entry name" value="THF_DH/CycHdrlase"/>
</dbReference>
<dbReference type="InterPro" id="IPR020630">
    <property type="entry name" value="THF_DH/CycHdrlase_cat_dom"/>
</dbReference>
<dbReference type="InterPro" id="IPR020867">
    <property type="entry name" value="THF_DH/CycHdrlase_CS"/>
</dbReference>
<dbReference type="InterPro" id="IPR020631">
    <property type="entry name" value="THF_DH/CycHdrlase_NAD-bd_dom"/>
</dbReference>
<dbReference type="NCBIfam" id="NF008058">
    <property type="entry name" value="PRK10792.1"/>
    <property type="match status" value="1"/>
</dbReference>
<dbReference type="NCBIfam" id="NF010783">
    <property type="entry name" value="PRK14186.1"/>
    <property type="match status" value="1"/>
</dbReference>
<dbReference type="PANTHER" id="PTHR48099:SF5">
    <property type="entry name" value="C-1-TETRAHYDROFOLATE SYNTHASE, CYTOPLASMIC"/>
    <property type="match status" value="1"/>
</dbReference>
<dbReference type="PANTHER" id="PTHR48099">
    <property type="entry name" value="C-1-TETRAHYDROFOLATE SYNTHASE, CYTOPLASMIC-RELATED"/>
    <property type="match status" value="1"/>
</dbReference>
<dbReference type="Pfam" id="PF00763">
    <property type="entry name" value="THF_DHG_CYH"/>
    <property type="match status" value="1"/>
</dbReference>
<dbReference type="Pfam" id="PF02882">
    <property type="entry name" value="THF_DHG_CYH_C"/>
    <property type="match status" value="1"/>
</dbReference>
<dbReference type="PRINTS" id="PR00085">
    <property type="entry name" value="THFDHDRGNASE"/>
</dbReference>
<dbReference type="SUPFAM" id="SSF53223">
    <property type="entry name" value="Aminoacid dehydrogenase-like, N-terminal domain"/>
    <property type="match status" value="1"/>
</dbReference>
<dbReference type="SUPFAM" id="SSF51735">
    <property type="entry name" value="NAD(P)-binding Rossmann-fold domains"/>
    <property type="match status" value="1"/>
</dbReference>
<dbReference type="PROSITE" id="PS00766">
    <property type="entry name" value="THF_DHG_CYH_1"/>
    <property type="match status" value="1"/>
</dbReference>
<dbReference type="PROSITE" id="PS00767">
    <property type="entry name" value="THF_DHG_CYH_2"/>
    <property type="match status" value="1"/>
</dbReference>
<name>FOLD_YERPE</name>
<feature type="chain" id="PRO_0000268573" description="Bifunctional protein FolD">
    <location>
        <begin position="1"/>
        <end position="288"/>
    </location>
</feature>
<feature type="binding site" evidence="1">
    <location>
        <begin position="166"/>
        <end position="168"/>
    </location>
    <ligand>
        <name>NADP(+)</name>
        <dbReference type="ChEBI" id="CHEBI:58349"/>
    </ligand>
</feature>
<feature type="binding site" evidence="1">
    <location>
        <position position="232"/>
    </location>
    <ligand>
        <name>NADP(+)</name>
        <dbReference type="ChEBI" id="CHEBI:58349"/>
    </ligand>
</feature>
<organism>
    <name type="scientific">Yersinia pestis</name>
    <dbReference type="NCBI Taxonomy" id="632"/>
    <lineage>
        <taxon>Bacteria</taxon>
        <taxon>Pseudomonadati</taxon>
        <taxon>Pseudomonadota</taxon>
        <taxon>Gammaproteobacteria</taxon>
        <taxon>Enterobacterales</taxon>
        <taxon>Yersiniaceae</taxon>
        <taxon>Yersinia</taxon>
    </lineage>
</organism>